<keyword id="KW-0479">Metal-binding</keyword>
<keyword id="KW-0539">Nucleus</keyword>
<keyword id="KW-1185">Reference proteome</keyword>
<keyword id="KW-0687">Ribonucleoprotein</keyword>
<keyword id="KW-0694">RNA-binding</keyword>
<keyword id="KW-0862">Zinc</keyword>
<keyword id="KW-0863">Zinc-finger</keyword>
<accession>A8NYM5</accession>
<comment type="function">
    <text evidence="1">Component of the spliceosomal U1 snRNP, which is essential for recognition of the pre-mRNA 5' splice-site and the subsequent assembly of the spliceosome. U1-C is directly involved in initial 5' splice-site recognition for both constitutive and regulated alternative splicing. The interaction with the 5' splice-site seems to precede base-pairing between the pre-mRNA and the U1 snRNA. Stimulates commitment or early (E) complex formation by stabilizing the base pairing of the 5' end of the U1 snRNA and the 5' splice-site region.</text>
</comment>
<comment type="subunit">
    <text evidence="1">U1 snRNP is composed of the 7 core Sm proteins B/B', D1, D2, D3, E, F and G that assemble in a heptameric protein ring on the Sm site of the small nuclear RNA to form the core snRNP, and at least 3 U1 snRNP-specific proteins U1-70K, U1-A and U1-C. U1-C interacts with U1 snRNA and the 5' splice-site region of the pre-mRNA.</text>
</comment>
<comment type="subcellular location">
    <subcellularLocation>
        <location evidence="1">Nucleus</location>
    </subcellularLocation>
</comment>
<comment type="similarity">
    <text evidence="1">Belongs to the U1 small nuclear ribonucleoprotein C family.</text>
</comment>
<feature type="chain" id="PRO_0000414286" description="U1 small nuclear ribonucleoprotein C">
    <location>
        <begin position="1"/>
        <end position="209"/>
    </location>
</feature>
<feature type="zinc finger region" description="Matrin-type" evidence="1">
    <location>
        <begin position="4"/>
        <end position="36"/>
    </location>
</feature>
<feature type="region of interest" description="Disordered" evidence="2">
    <location>
        <begin position="72"/>
        <end position="209"/>
    </location>
</feature>
<feature type="compositionally biased region" description="Low complexity" evidence="2">
    <location>
        <begin position="72"/>
        <end position="87"/>
    </location>
</feature>
<feature type="compositionally biased region" description="Pro residues" evidence="2">
    <location>
        <begin position="93"/>
        <end position="150"/>
    </location>
</feature>
<feature type="compositionally biased region" description="Pro residues" evidence="2">
    <location>
        <begin position="159"/>
        <end position="191"/>
    </location>
</feature>
<organism>
    <name type="scientific">Coprinopsis cinerea (strain Okayama-7 / 130 / ATCC MYA-4618 / FGSC 9003)</name>
    <name type="common">Inky cap fungus</name>
    <name type="synonym">Hormographiella aspergillata</name>
    <dbReference type="NCBI Taxonomy" id="240176"/>
    <lineage>
        <taxon>Eukaryota</taxon>
        <taxon>Fungi</taxon>
        <taxon>Dikarya</taxon>
        <taxon>Basidiomycota</taxon>
        <taxon>Agaricomycotina</taxon>
        <taxon>Agaricomycetes</taxon>
        <taxon>Agaricomycetidae</taxon>
        <taxon>Agaricales</taxon>
        <taxon>Agaricineae</taxon>
        <taxon>Psathyrellaceae</taxon>
        <taxon>Coprinopsis</taxon>
    </lineage>
</organism>
<gene>
    <name type="ORF">CC1G_01380</name>
</gene>
<reference key="1">
    <citation type="journal article" date="2010" name="Proc. Natl. Acad. Sci. U.S.A.">
        <title>Insights into evolution of multicellular fungi from the assembled chromosomes of the mushroom Coprinopsis cinerea (Coprinus cinereus).</title>
        <authorList>
            <person name="Stajich J.E."/>
            <person name="Wilke S.K."/>
            <person name="Ahren D."/>
            <person name="Au C.H."/>
            <person name="Birren B.W."/>
            <person name="Borodovsky M."/>
            <person name="Burns C."/>
            <person name="Canbaeck B."/>
            <person name="Casselton L.A."/>
            <person name="Cheng C.K."/>
            <person name="Deng J."/>
            <person name="Dietrich F.S."/>
            <person name="Fargo D.C."/>
            <person name="Farman M.L."/>
            <person name="Gathman A.C."/>
            <person name="Goldberg J."/>
            <person name="Guigo R."/>
            <person name="Hoegger P.J."/>
            <person name="Hooker J.B."/>
            <person name="Huggins A."/>
            <person name="James T.Y."/>
            <person name="Kamada T."/>
            <person name="Kilaru S."/>
            <person name="Kodira C."/>
            <person name="Kuees U."/>
            <person name="Kupfer D."/>
            <person name="Kwan H.S."/>
            <person name="Lomsadze A."/>
            <person name="Li W."/>
            <person name="Lilly W.W."/>
            <person name="Ma L.-J."/>
            <person name="Mackey A.J."/>
            <person name="Manning G."/>
            <person name="Martin F."/>
            <person name="Muraguchi H."/>
            <person name="Natvig D.O."/>
            <person name="Palmerini H."/>
            <person name="Ramesh M.A."/>
            <person name="Rehmeyer C.J."/>
            <person name="Roe B.A."/>
            <person name="Shenoy N."/>
            <person name="Stanke M."/>
            <person name="Ter-Hovhannisyan V."/>
            <person name="Tunlid A."/>
            <person name="Velagapudi R."/>
            <person name="Vision T.J."/>
            <person name="Zeng Q."/>
            <person name="Zolan M.E."/>
            <person name="Pukkila P.J."/>
        </authorList>
    </citation>
    <scope>NUCLEOTIDE SEQUENCE [LARGE SCALE GENOMIC DNA]</scope>
    <source>
        <strain>Okayama-7 / 130 / ATCC MYA-4618 / FGSC 9003</strain>
    </source>
</reference>
<name>RU1C_COPC7</name>
<dbReference type="EMBL" id="AACS02000005">
    <property type="protein sequence ID" value="EAU84384.1"/>
    <property type="molecule type" value="Genomic_DNA"/>
</dbReference>
<dbReference type="RefSeq" id="XP_001837468.1">
    <property type="nucleotide sequence ID" value="XM_001837416.1"/>
</dbReference>
<dbReference type="SMR" id="A8NYM5"/>
<dbReference type="STRING" id="240176.A8NYM5"/>
<dbReference type="GeneID" id="6014024"/>
<dbReference type="KEGG" id="cci:CC1G_01380"/>
<dbReference type="VEuPathDB" id="FungiDB:CC1G_01380"/>
<dbReference type="eggNOG" id="KOG3454">
    <property type="taxonomic scope" value="Eukaryota"/>
</dbReference>
<dbReference type="HOGENOM" id="CLU_079697_1_0_1"/>
<dbReference type="InParanoid" id="A8NYM5"/>
<dbReference type="OMA" id="QMRPPLM"/>
<dbReference type="OrthoDB" id="76567at2759"/>
<dbReference type="Proteomes" id="UP000001861">
    <property type="component" value="Unassembled WGS sequence"/>
</dbReference>
<dbReference type="GO" id="GO:0000243">
    <property type="term" value="C:commitment complex"/>
    <property type="evidence" value="ECO:0007669"/>
    <property type="project" value="UniProtKB-UniRule"/>
</dbReference>
<dbReference type="GO" id="GO:0005685">
    <property type="term" value="C:U1 snRNP"/>
    <property type="evidence" value="ECO:0007669"/>
    <property type="project" value="UniProtKB-UniRule"/>
</dbReference>
<dbReference type="GO" id="GO:0071004">
    <property type="term" value="C:U2-type prespliceosome"/>
    <property type="evidence" value="ECO:0007669"/>
    <property type="project" value="UniProtKB-UniRule"/>
</dbReference>
<dbReference type="GO" id="GO:0003729">
    <property type="term" value="F:mRNA binding"/>
    <property type="evidence" value="ECO:0007669"/>
    <property type="project" value="UniProtKB-UniRule"/>
</dbReference>
<dbReference type="GO" id="GO:0030627">
    <property type="term" value="F:pre-mRNA 5'-splice site binding"/>
    <property type="evidence" value="ECO:0007669"/>
    <property type="project" value="InterPro"/>
</dbReference>
<dbReference type="GO" id="GO:0030619">
    <property type="term" value="F:U1 snRNA binding"/>
    <property type="evidence" value="ECO:0007669"/>
    <property type="project" value="UniProtKB-UniRule"/>
</dbReference>
<dbReference type="GO" id="GO:0008270">
    <property type="term" value="F:zinc ion binding"/>
    <property type="evidence" value="ECO:0007669"/>
    <property type="project" value="UniProtKB-UniRule"/>
</dbReference>
<dbReference type="GO" id="GO:0000395">
    <property type="term" value="P:mRNA 5'-splice site recognition"/>
    <property type="evidence" value="ECO:0007669"/>
    <property type="project" value="UniProtKB-UniRule"/>
</dbReference>
<dbReference type="GO" id="GO:0000387">
    <property type="term" value="P:spliceosomal snRNP assembly"/>
    <property type="evidence" value="ECO:0007669"/>
    <property type="project" value="UniProtKB-UniRule"/>
</dbReference>
<dbReference type="FunFam" id="3.30.160.60:FF:000059">
    <property type="entry name" value="U1 small nuclear ribonucleoprotein C"/>
    <property type="match status" value="1"/>
</dbReference>
<dbReference type="Gene3D" id="3.30.160.60">
    <property type="entry name" value="Classic Zinc Finger"/>
    <property type="match status" value="1"/>
</dbReference>
<dbReference type="HAMAP" id="MF_03153">
    <property type="entry name" value="U1_C"/>
    <property type="match status" value="1"/>
</dbReference>
<dbReference type="InterPro" id="IPR000690">
    <property type="entry name" value="Matrin/U1-C_Znf_C2H2"/>
</dbReference>
<dbReference type="InterPro" id="IPR003604">
    <property type="entry name" value="Matrin/U1-like-C_Znf_C2H2"/>
</dbReference>
<dbReference type="InterPro" id="IPR013085">
    <property type="entry name" value="U1-CZ_Znf_C2H2"/>
</dbReference>
<dbReference type="InterPro" id="IPR017340">
    <property type="entry name" value="U1_snRNP-C"/>
</dbReference>
<dbReference type="InterPro" id="IPR036236">
    <property type="entry name" value="Znf_C2H2_sf"/>
</dbReference>
<dbReference type="PANTHER" id="PTHR31148">
    <property type="entry name" value="U1 SMALL NUCLEAR RIBONUCLEOPROTEIN C"/>
    <property type="match status" value="1"/>
</dbReference>
<dbReference type="PANTHER" id="PTHR31148:SF1">
    <property type="entry name" value="U1 SMALL NUCLEAR RIBONUCLEOPROTEIN C"/>
    <property type="match status" value="1"/>
</dbReference>
<dbReference type="Pfam" id="PF06220">
    <property type="entry name" value="zf-U1"/>
    <property type="match status" value="1"/>
</dbReference>
<dbReference type="PIRSF" id="PIRSF037969">
    <property type="entry name" value="U1_snRNP-C"/>
    <property type="match status" value="1"/>
</dbReference>
<dbReference type="SMART" id="SM00451">
    <property type="entry name" value="ZnF_U1"/>
    <property type="match status" value="1"/>
</dbReference>
<dbReference type="SUPFAM" id="SSF57667">
    <property type="entry name" value="beta-beta-alpha zinc fingers"/>
    <property type="match status" value="1"/>
</dbReference>
<dbReference type="PROSITE" id="PS50171">
    <property type="entry name" value="ZF_MATRIN"/>
    <property type="match status" value="1"/>
</dbReference>
<proteinExistence type="inferred from homology"/>
<evidence type="ECO:0000255" key="1">
    <source>
        <dbReference type="HAMAP-Rule" id="MF_03153"/>
    </source>
</evidence>
<evidence type="ECO:0000256" key="2">
    <source>
        <dbReference type="SAM" id="MobiDB-lite"/>
    </source>
</evidence>
<sequence length="209" mass="21170">MPKHYCDYCDVFLTHDSASVRKAHNSGRNHLANVRDYYASLGHDKAQSIIDQITSAFESGQGPPPGGFGFGPQHLQAPPQGGFAPPMGGFPPGGFPPGPRPPFPPGPGFPPMMPPGAPPFPPNAMPPPGAFGGPPPFPPNGPPGAPPFPPNASQQGGPPGAPSFPPPPGGFNGPPPPSGQNSQGPPPPTNPGPGGMHPDRARMMGPGGR</sequence>
<protein>
    <recommendedName>
        <fullName evidence="1">U1 small nuclear ribonucleoprotein C</fullName>
        <shortName evidence="1">U1 snRNP C</shortName>
        <shortName evidence="1">U1-C</shortName>
        <shortName evidence="1">U1C</shortName>
    </recommendedName>
</protein>